<proteinExistence type="evidence at protein level"/>
<comment type="function">
    <text evidence="1">Plays a role in protein ubiquitination, sorting and degradation through its association with cdc-48.1 and/or cdc-48.2.</text>
</comment>
<comment type="subunit">
    <text evidence="6">Interacts with cdc-48.1.</text>
</comment>
<comment type="subcellular location">
    <subcellularLocation>
        <location evidence="6">Cytoplasm</location>
    </subcellularLocation>
</comment>
<comment type="alternative products">
    <event type="alternative splicing"/>
    <isoform>
        <id>G5EES6-1</id>
        <name evidence="11">b</name>
        <sequence type="displayed"/>
    </isoform>
    <isoform>
        <id>G5EES6-2</id>
        <name evidence="10">a</name>
        <sequence type="described" ref="VSP_059916"/>
    </isoform>
</comment>
<comment type="tissue specificity">
    <text evidence="6">Expressed in intestine (at protein level).</text>
</comment>
<comment type="domain">
    <text evidence="1">The PUL domain mediates the interaction with cdc-48.1 and/or cdc-48.2 C-terminus.</text>
</comment>
<comment type="domain">
    <text evidence="1">The PFU domain mediates interaction with ubiquitin.</text>
</comment>
<comment type="similarity">
    <text evidence="8">Belongs to the WD repeat PLAP family.</text>
</comment>
<accession>G5EES6</accession>
<accession>G5EFK5</accession>
<gene>
    <name evidence="11" type="primary">ufd-3</name>
    <name evidence="11" type="ORF">C05C10.6</name>
</gene>
<protein>
    <recommendedName>
        <fullName evidence="7 11">Ubiquitin fusion degradation protein 3 homolog</fullName>
    </recommendedName>
</protein>
<organism evidence="9">
    <name type="scientific">Caenorhabditis elegans</name>
    <dbReference type="NCBI Taxonomy" id="6239"/>
    <lineage>
        <taxon>Eukaryota</taxon>
        <taxon>Metazoa</taxon>
        <taxon>Ecdysozoa</taxon>
        <taxon>Nematoda</taxon>
        <taxon>Chromadorea</taxon>
        <taxon>Rhabditida</taxon>
        <taxon>Rhabditina</taxon>
        <taxon>Rhabditomorpha</taxon>
        <taxon>Rhabditoidea</taxon>
        <taxon>Rhabditidae</taxon>
        <taxon>Peloderinae</taxon>
        <taxon>Caenorhabditis</taxon>
    </lineage>
</organism>
<reference evidence="9" key="1">
    <citation type="journal article" date="1998" name="Science">
        <title>Genome sequence of the nematode C. elegans: a platform for investigating biology.</title>
        <authorList>
            <consortium name="The C. elegans sequencing consortium"/>
        </authorList>
    </citation>
    <scope>NUCLEOTIDE SEQUENCE [LARGE SCALE GENOMIC DNA]</scope>
    <source>
        <strain evidence="9">Bristol N2</strain>
    </source>
</reference>
<reference evidence="8" key="2">
    <citation type="journal article" date="2015" name="Biochem. Biophys. Res. Commun.">
        <title>Characterization of C-terminal adaptors, UFD-2 and UFD-3, of CDC-48 on the polyglutamine aggregation in C. elegans.</title>
        <authorList>
            <person name="Murayama Y."/>
            <person name="Ogura T."/>
            <person name="Yamanaka K."/>
        </authorList>
    </citation>
    <scope>INTERACTION WITH CDC-48.1</scope>
    <scope>SUBCELLULAR LOCATION</scope>
    <scope>TISSUE SPECIFICITY</scope>
</reference>
<keyword id="KW-0025">Alternative splicing</keyword>
<keyword id="KW-0963">Cytoplasm</keyword>
<keyword id="KW-1185">Reference proteome</keyword>
<keyword id="KW-0677">Repeat</keyword>
<keyword id="KW-0853">WD repeat</keyword>
<evidence type="ECO:0000250" key="1">
    <source>
        <dbReference type="UniProtKB" id="Q9Y263"/>
    </source>
</evidence>
<evidence type="ECO:0000255" key="2"/>
<evidence type="ECO:0000255" key="3">
    <source>
        <dbReference type="PROSITE-ProRule" id="PRU00727"/>
    </source>
</evidence>
<evidence type="ECO:0000255" key="4">
    <source>
        <dbReference type="PROSITE-ProRule" id="PRU00729"/>
    </source>
</evidence>
<evidence type="ECO:0000256" key="5">
    <source>
        <dbReference type="SAM" id="MobiDB-lite"/>
    </source>
</evidence>
<evidence type="ECO:0000269" key="6">
    <source>
    </source>
</evidence>
<evidence type="ECO:0000303" key="7">
    <source>
    </source>
</evidence>
<evidence type="ECO:0000305" key="8"/>
<evidence type="ECO:0000312" key="9">
    <source>
        <dbReference type="Proteomes" id="UP000001940"/>
    </source>
</evidence>
<evidence type="ECO:0000312" key="10">
    <source>
        <dbReference type="WormBase" id="C05C10.6a"/>
    </source>
</evidence>
<evidence type="ECO:0000312" key="11">
    <source>
        <dbReference type="WormBase" id="C05C10.6b"/>
    </source>
</evidence>
<feature type="chain" id="PRO_0000445616" description="Ubiquitin fusion degradation protein 3 homolog">
    <location>
        <begin position="1"/>
        <end position="860"/>
    </location>
</feature>
<feature type="repeat" description="WD 1" evidence="2">
    <location>
        <begin position="27"/>
        <end position="65"/>
    </location>
</feature>
<feature type="repeat" description="WD 2" evidence="2">
    <location>
        <begin position="71"/>
        <end position="112"/>
    </location>
</feature>
<feature type="repeat" description="WD 3" evidence="2">
    <location>
        <begin position="115"/>
        <end position="154"/>
    </location>
</feature>
<feature type="repeat" description="WD 4" evidence="2">
    <location>
        <begin position="163"/>
        <end position="203"/>
    </location>
</feature>
<feature type="repeat" description="WD 5" evidence="2">
    <location>
        <begin position="204"/>
        <end position="242"/>
    </location>
</feature>
<feature type="repeat" description="WD 6" evidence="2">
    <location>
        <begin position="244"/>
        <end position="283"/>
    </location>
</feature>
<feature type="domain" description="PFU" evidence="3">
    <location>
        <begin position="397"/>
        <end position="497"/>
    </location>
</feature>
<feature type="domain" description="PUL" evidence="4">
    <location>
        <begin position="586"/>
        <end position="856"/>
    </location>
</feature>
<feature type="region of interest" description="Disordered" evidence="5">
    <location>
        <begin position="494"/>
        <end position="585"/>
    </location>
</feature>
<feature type="splice variant" id="VSP_059916" description="In isoform a." evidence="8">
    <location>
        <begin position="156"/>
        <end position="157"/>
    </location>
</feature>
<name>UFD3_CAEEL</name>
<sequence length="860" mass="93915">MADDGLGDVPMETESMPQYTISHVIEAHKSDTKALAVTQGGCLISGGRDETVKFWAKKGKQYTKTHAFEQPKGITVNSIAYAELADGWRLFVGRRDGTIAVFGPSQAEPYAIFNEHKQNVCCLHINEKATHMLSGSWDSNVIIWPITELNSSSFTFQTIVCPGHTLSVWALASFPDLPNTYLSASADKTIRMWFGDTTLSVFKGHTDVVRALVVLSSSHFLSAGNDGHIIHWDVASASILRKFATQAHEFIYSMTLSDSHILTTGEDGTLEFWAIDGGKDGNLAIVSEAVIQLPTTNTWDAKVLLNSDIAVAGSDGRIYIMTTDKNRKADDDILDAFDAEVVAKLTAKTERMKQEEHETVTIKVDIDDRPTQLNLKYKKGTDPGLCAQEFLSENNLPIHYLEEITRFIKDRIPEARAFDLKSGKKVIVDGKEYDYALGVNFGKGEPDKQMPFNVNESPQFAAQRFVERHQLPVSVIPSLAGMISQEMDKLSKGAASAQSGYEDPFTGPGRYVPQGSSNSGGHGADPFTGSGRYVPQASNSSGFDTGFSGDPLTGDGGYRASAPENTGSHAVPLSSLPQNKKKPRGPLVPVPDFYIIGLAGKGEKAIAKLKELNEKQDAFQLNPDQINGLEELFVLPTSSNYSSEVTQSAFEMSLQWPVEHLTPVLDFLRIALTHHSLNSYFCDRERGQELVGRLIAILVSDPADVALKVLVCRCIANAFSHPVGRNLFASTELSTLAPLVVRQVLNEKTVLQMSAATALANWSLALLQQSEQCEQLGPKEDLLRAILNGIESVDSFGYLGEDAIIRLLQALVTVMWGDASVIRLAKNRNIAQIAARLKDAVSNDSGKNIARDIVEMTYAV</sequence>
<dbReference type="EMBL" id="BX284602">
    <property type="protein sequence ID" value="CAA88206.1"/>
    <property type="molecule type" value="Genomic_DNA"/>
</dbReference>
<dbReference type="EMBL" id="BX284602">
    <property type="protein sequence ID" value="CAC42247.1"/>
    <property type="molecule type" value="Genomic_DNA"/>
</dbReference>
<dbReference type="PIR" id="T18946">
    <property type="entry name" value="T18946"/>
</dbReference>
<dbReference type="RefSeq" id="NP_496146.1">
    <molecule id="G5EES6-1"/>
    <property type="nucleotide sequence ID" value="NM_063745.4"/>
</dbReference>
<dbReference type="RefSeq" id="NP_496147.1">
    <molecule id="G5EES6-2"/>
    <property type="nucleotide sequence ID" value="NM_063746.5"/>
</dbReference>
<dbReference type="SMR" id="G5EES6"/>
<dbReference type="FunCoup" id="G5EES6">
    <property type="interactions" value="3814"/>
</dbReference>
<dbReference type="STRING" id="6239.C05C10.6b.1"/>
<dbReference type="PaxDb" id="6239-C05C10.6b"/>
<dbReference type="PeptideAtlas" id="G5EES6"/>
<dbReference type="EnsemblMetazoa" id="C05C10.6a.1">
    <molecule id="G5EES6-2"/>
    <property type="protein sequence ID" value="C05C10.6a.1"/>
    <property type="gene ID" value="WBGene00007333"/>
</dbReference>
<dbReference type="EnsemblMetazoa" id="C05C10.6b.1">
    <molecule id="G5EES6-1"/>
    <property type="protein sequence ID" value="C05C10.6b.1"/>
    <property type="gene ID" value="WBGene00007333"/>
</dbReference>
<dbReference type="GeneID" id="3565222"/>
<dbReference type="KEGG" id="cel:CELE_C05C10.6"/>
<dbReference type="AGR" id="WB:WBGene00007333"/>
<dbReference type="CTD" id="3565222"/>
<dbReference type="WormBase" id="C05C10.6a">
    <molecule id="G5EES6-2"/>
    <property type="protein sequence ID" value="CE02113"/>
    <property type="gene ID" value="WBGene00007333"/>
    <property type="gene designation" value="ufd-3"/>
</dbReference>
<dbReference type="WormBase" id="C05C10.6b">
    <molecule id="G5EES6-1"/>
    <property type="protein sequence ID" value="CE27796"/>
    <property type="gene ID" value="WBGene00007333"/>
    <property type="gene designation" value="ufd-3"/>
</dbReference>
<dbReference type="eggNOG" id="KOG0301">
    <property type="taxonomic scope" value="Eukaryota"/>
</dbReference>
<dbReference type="HOGENOM" id="CLU_011791_2_0_1"/>
<dbReference type="InParanoid" id="G5EES6"/>
<dbReference type="OMA" id="CCLRFYL"/>
<dbReference type="OrthoDB" id="10265988at2759"/>
<dbReference type="PhylomeDB" id="G5EES6"/>
<dbReference type="PRO" id="PR:G5EES6"/>
<dbReference type="Proteomes" id="UP000001940">
    <property type="component" value="Chromosome II"/>
</dbReference>
<dbReference type="Bgee" id="WBGene00007333">
    <property type="expression patterns" value="Expressed in germ line (C elegans) and 4 other cell types or tissues"/>
</dbReference>
<dbReference type="ExpressionAtlas" id="G5EES6">
    <property type="expression patterns" value="baseline and differential"/>
</dbReference>
<dbReference type="GO" id="GO:0005737">
    <property type="term" value="C:cytoplasm"/>
    <property type="evidence" value="ECO:0000314"/>
    <property type="project" value="UniProtKB"/>
</dbReference>
<dbReference type="GO" id="GO:0005634">
    <property type="term" value="C:nucleus"/>
    <property type="evidence" value="ECO:0000318"/>
    <property type="project" value="GO_Central"/>
</dbReference>
<dbReference type="GO" id="GO:0043130">
    <property type="term" value="F:ubiquitin binding"/>
    <property type="evidence" value="ECO:0000318"/>
    <property type="project" value="GO_Central"/>
</dbReference>
<dbReference type="GO" id="GO:0043161">
    <property type="term" value="P:proteasome-mediated ubiquitin-dependent protein catabolic process"/>
    <property type="evidence" value="ECO:0000318"/>
    <property type="project" value="GO_Central"/>
</dbReference>
<dbReference type="GO" id="GO:0010992">
    <property type="term" value="P:ubiquitin recycling"/>
    <property type="evidence" value="ECO:0000318"/>
    <property type="project" value="GO_Central"/>
</dbReference>
<dbReference type="FunFam" id="2.130.10.10:FF:001851">
    <property type="entry name" value="Chromosome 19, whole genome shotgun sequence"/>
    <property type="match status" value="1"/>
</dbReference>
<dbReference type="FunFam" id="1.25.10.10:FF:001436">
    <property type="entry name" value="Ubiquitin fusion degradation protein 3 homolog"/>
    <property type="match status" value="1"/>
</dbReference>
<dbReference type="Gene3D" id="1.25.10.10">
    <property type="entry name" value="Leucine-rich Repeat Variant"/>
    <property type="match status" value="1"/>
</dbReference>
<dbReference type="Gene3D" id="3.10.20.870">
    <property type="entry name" value="PFU (PLAA family ubiquitin binding), C-terminal domain"/>
    <property type="match status" value="2"/>
</dbReference>
<dbReference type="Gene3D" id="2.130.10.10">
    <property type="entry name" value="YVTN repeat-like/Quinoprotein amine dehydrogenase"/>
    <property type="match status" value="1"/>
</dbReference>
<dbReference type="InterPro" id="IPR011989">
    <property type="entry name" value="ARM-like"/>
</dbReference>
<dbReference type="InterPro" id="IPR015155">
    <property type="entry name" value="PFU"/>
</dbReference>
<dbReference type="InterPro" id="IPR038122">
    <property type="entry name" value="PFU_sf"/>
</dbReference>
<dbReference type="InterPro" id="IPR013535">
    <property type="entry name" value="PUL_dom"/>
</dbReference>
<dbReference type="InterPro" id="IPR015943">
    <property type="entry name" value="WD40/YVTN_repeat-like_dom_sf"/>
</dbReference>
<dbReference type="InterPro" id="IPR036322">
    <property type="entry name" value="WD40_repeat_dom_sf"/>
</dbReference>
<dbReference type="InterPro" id="IPR001680">
    <property type="entry name" value="WD40_rpt"/>
</dbReference>
<dbReference type="PANTHER" id="PTHR19849">
    <property type="entry name" value="PHOSPHOLIPASE A-2-ACTIVATING PROTEIN"/>
    <property type="match status" value="1"/>
</dbReference>
<dbReference type="PANTHER" id="PTHR19849:SF0">
    <property type="entry name" value="PHOSPHOLIPASE A-2-ACTIVATING PROTEIN"/>
    <property type="match status" value="1"/>
</dbReference>
<dbReference type="Pfam" id="PF09070">
    <property type="entry name" value="PFU"/>
    <property type="match status" value="2"/>
</dbReference>
<dbReference type="Pfam" id="PF08324">
    <property type="entry name" value="PUL"/>
    <property type="match status" value="1"/>
</dbReference>
<dbReference type="Pfam" id="PF00400">
    <property type="entry name" value="WD40"/>
    <property type="match status" value="4"/>
</dbReference>
<dbReference type="SMART" id="SM00320">
    <property type="entry name" value="WD40"/>
    <property type="match status" value="6"/>
</dbReference>
<dbReference type="SUPFAM" id="SSF50978">
    <property type="entry name" value="WD40 repeat-like"/>
    <property type="match status" value="1"/>
</dbReference>
<dbReference type="PROSITE" id="PS51394">
    <property type="entry name" value="PFU"/>
    <property type="match status" value="1"/>
</dbReference>
<dbReference type="PROSITE" id="PS51396">
    <property type="entry name" value="PUL"/>
    <property type="match status" value="1"/>
</dbReference>
<dbReference type="PROSITE" id="PS50082">
    <property type="entry name" value="WD_REPEATS_2"/>
    <property type="match status" value="3"/>
</dbReference>
<dbReference type="PROSITE" id="PS50294">
    <property type="entry name" value="WD_REPEATS_REGION"/>
    <property type="match status" value="1"/>
</dbReference>